<sequence>MDSLQPLFEQLFGSEWGGPLFLLIKNLLLILAIVIPLLLAVAYLTFAERKIIAYMQVRVGPNRVTFFDIPWLRGWGQPIADAVKAIMKEIIIPTGANKFLFLLAPVLAIGPALAAWAVVPFSPELVLADINAGLLYILAMTSLGVYGVIIAGWASNSKYAFLGAMRSAAQVVSYELAMGFALVCVLMMSSSLNLGDIVAGQQGGSFLNWYLIPLFPMFLVYFISGVAETNRAPFDVAEGESEIVAGFHVDYSGMAFTVFFLAEYANMILVATLASIMFLGGWLPPVDIAPFNLIPGMVWLLLKIAFMLFFFLWFRATFPRYRYDQIMRLGWKVFIPLTLVWIVVLGMVMQLPEVVRQSFPLNLWFN</sequence>
<feature type="chain" id="PRO_0000240092" description="NADH-quinone oxidoreductase subunit H">
    <location>
        <begin position="1"/>
        <end position="366"/>
    </location>
</feature>
<feature type="transmembrane region" description="Helical" evidence="1">
    <location>
        <begin position="27"/>
        <end position="47"/>
    </location>
</feature>
<feature type="transmembrane region" description="Helical" evidence="1">
    <location>
        <begin position="99"/>
        <end position="119"/>
    </location>
</feature>
<feature type="transmembrane region" description="Helical" evidence="1">
    <location>
        <begin position="134"/>
        <end position="154"/>
    </location>
</feature>
<feature type="transmembrane region" description="Helical" evidence="1">
    <location>
        <begin position="168"/>
        <end position="188"/>
    </location>
</feature>
<feature type="transmembrane region" description="Helical" evidence="1">
    <location>
        <begin position="206"/>
        <end position="226"/>
    </location>
</feature>
<feature type="transmembrane region" description="Helical" evidence="1">
    <location>
        <begin position="268"/>
        <end position="288"/>
    </location>
</feature>
<feature type="transmembrane region" description="Helical" evidence="1">
    <location>
        <begin position="294"/>
        <end position="314"/>
    </location>
</feature>
<feature type="transmembrane region" description="Helical" evidence="1">
    <location>
        <begin position="329"/>
        <end position="349"/>
    </location>
</feature>
<proteinExistence type="inferred from homology"/>
<accession>Q82TV0</accession>
<protein>
    <recommendedName>
        <fullName evidence="1">NADH-quinone oxidoreductase subunit H</fullName>
        <ecNumber evidence="1">7.1.1.-</ecNumber>
    </recommendedName>
    <alternativeName>
        <fullName evidence="1">NADH dehydrogenase I subunit H</fullName>
    </alternativeName>
    <alternativeName>
        <fullName evidence="1">NDH-1 subunit H</fullName>
    </alternativeName>
</protein>
<comment type="function">
    <text evidence="1">NDH-1 shuttles electrons from NADH, via FMN and iron-sulfur (Fe-S) centers, to quinones in the respiratory chain. The immediate electron acceptor for the enzyme in this species is believed to be ubiquinone. Couples the redox reaction to proton translocation (for every two electrons transferred, four hydrogen ions are translocated across the cytoplasmic membrane), and thus conserves the redox energy in a proton gradient. This subunit may bind ubiquinone.</text>
</comment>
<comment type="catalytic activity">
    <reaction evidence="1">
        <text>a quinone + NADH + 5 H(+)(in) = a quinol + NAD(+) + 4 H(+)(out)</text>
        <dbReference type="Rhea" id="RHEA:57888"/>
        <dbReference type="ChEBI" id="CHEBI:15378"/>
        <dbReference type="ChEBI" id="CHEBI:24646"/>
        <dbReference type="ChEBI" id="CHEBI:57540"/>
        <dbReference type="ChEBI" id="CHEBI:57945"/>
        <dbReference type="ChEBI" id="CHEBI:132124"/>
    </reaction>
</comment>
<comment type="subunit">
    <text evidence="1">NDH-1 is composed of 14 different subunits. Subunits NuoA, H, J, K, L, M, N constitute the membrane sector of the complex.</text>
</comment>
<comment type="subcellular location">
    <subcellularLocation>
        <location evidence="1">Cell inner membrane</location>
        <topology evidence="1">Multi-pass membrane protein</topology>
    </subcellularLocation>
</comment>
<comment type="similarity">
    <text evidence="1">Belongs to the complex I subunit 1 family.</text>
</comment>
<dbReference type="EC" id="7.1.1.-" evidence="1"/>
<dbReference type="EMBL" id="AL954747">
    <property type="protein sequence ID" value="CAD85681.1"/>
    <property type="molecule type" value="Genomic_DNA"/>
</dbReference>
<dbReference type="RefSeq" id="WP_011112321.1">
    <property type="nucleotide sequence ID" value="NC_004757.1"/>
</dbReference>
<dbReference type="SMR" id="Q82TV0"/>
<dbReference type="STRING" id="228410.NE1770"/>
<dbReference type="GeneID" id="87104931"/>
<dbReference type="KEGG" id="neu:NE1770"/>
<dbReference type="eggNOG" id="COG1005">
    <property type="taxonomic scope" value="Bacteria"/>
</dbReference>
<dbReference type="HOGENOM" id="CLU_015134_0_1_4"/>
<dbReference type="OrthoDB" id="9803734at2"/>
<dbReference type="PhylomeDB" id="Q82TV0"/>
<dbReference type="Proteomes" id="UP000001416">
    <property type="component" value="Chromosome"/>
</dbReference>
<dbReference type="GO" id="GO:0005886">
    <property type="term" value="C:plasma membrane"/>
    <property type="evidence" value="ECO:0007669"/>
    <property type="project" value="UniProtKB-SubCell"/>
</dbReference>
<dbReference type="GO" id="GO:0003954">
    <property type="term" value="F:NADH dehydrogenase activity"/>
    <property type="evidence" value="ECO:0007669"/>
    <property type="project" value="TreeGrafter"/>
</dbReference>
<dbReference type="GO" id="GO:0016655">
    <property type="term" value="F:oxidoreductase activity, acting on NAD(P)H, quinone or similar compound as acceptor"/>
    <property type="evidence" value="ECO:0007669"/>
    <property type="project" value="UniProtKB-UniRule"/>
</dbReference>
<dbReference type="GO" id="GO:0048038">
    <property type="term" value="F:quinone binding"/>
    <property type="evidence" value="ECO:0007669"/>
    <property type="project" value="UniProtKB-KW"/>
</dbReference>
<dbReference type="GO" id="GO:0009060">
    <property type="term" value="P:aerobic respiration"/>
    <property type="evidence" value="ECO:0007669"/>
    <property type="project" value="TreeGrafter"/>
</dbReference>
<dbReference type="HAMAP" id="MF_01350">
    <property type="entry name" value="NDH1_NuoH"/>
    <property type="match status" value="1"/>
</dbReference>
<dbReference type="InterPro" id="IPR001694">
    <property type="entry name" value="NADH_UbQ_OxRdtase_su1/FPO"/>
</dbReference>
<dbReference type="InterPro" id="IPR018086">
    <property type="entry name" value="NADH_UbQ_OxRdtase_su1_CS"/>
</dbReference>
<dbReference type="NCBIfam" id="NF004741">
    <property type="entry name" value="PRK06076.1-2"/>
    <property type="match status" value="1"/>
</dbReference>
<dbReference type="PANTHER" id="PTHR11432">
    <property type="entry name" value="NADH DEHYDROGENASE SUBUNIT 1"/>
    <property type="match status" value="1"/>
</dbReference>
<dbReference type="PANTHER" id="PTHR11432:SF3">
    <property type="entry name" value="NADH-UBIQUINONE OXIDOREDUCTASE CHAIN 1"/>
    <property type="match status" value="1"/>
</dbReference>
<dbReference type="Pfam" id="PF00146">
    <property type="entry name" value="NADHdh"/>
    <property type="match status" value="1"/>
</dbReference>
<dbReference type="PROSITE" id="PS00668">
    <property type="entry name" value="COMPLEX1_ND1_2"/>
    <property type="match status" value="1"/>
</dbReference>
<gene>
    <name evidence="1" type="primary">nuoH</name>
    <name type="ordered locus">NE1770</name>
</gene>
<evidence type="ECO:0000255" key="1">
    <source>
        <dbReference type="HAMAP-Rule" id="MF_01350"/>
    </source>
</evidence>
<keyword id="KW-0997">Cell inner membrane</keyword>
<keyword id="KW-1003">Cell membrane</keyword>
<keyword id="KW-0472">Membrane</keyword>
<keyword id="KW-0520">NAD</keyword>
<keyword id="KW-0874">Quinone</keyword>
<keyword id="KW-1185">Reference proteome</keyword>
<keyword id="KW-1278">Translocase</keyword>
<keyword id="KW-0812">Transmembrane</keyword>
<keyword id="KW-1133">Transmembrane helix</keyword>
<keyword id="KW-0830">Ubiquinone</keyword>
<name>NUOH_NITEU</name>
<reference key="1">
    <citation type="journal article" date="2003" name="J. Bacteriol.">
        <title>Complete genome sequence of the ammonia-oxidizing bacterium and obligate chemolithoautotroph Nitrosomonas europaea.</title>
        <authorList>
            <person name="Chain P."/>
            <person name="Lamerdin J.E."/>
            <person name="Larimer F.W."/>
            <person name="Regala W."/>
            <person name="Lao V."/>
            <person name="Land M.L."/>
            <person name="Hauser L."/>
            <person name="Hooper A.B."/>
            <person name="Klotz M.G."/>
            <person name="Norton J."/>
            <person name="Sayavedra-Soto L.A."/>
            <person name="Arciero D.M."/>
            <person name="Hommes N.G."/>
            <person name="Whittaker M.M."/>
            <person name="Arp D.J."/>
        </authorList>
    </citation>
    <scope>NUCLEOTIDE SEQUENCE [LARGE SCALE GENOMIC DNA]</scope>
    <source>
        <strain>ATCC 19718 / CIP 103999 / KCTC 2705 / NBRC 14298</strain>
    </source>
</reference>
<organism>
    <name type="scientific">Nitrosomonas europaea (strain ATCC 19718 / CIP 103999 / KCTC 2705 / NBRC 14298)</name>
    <dbReference type="NCBI Taxonomy" id="228410"/>
    <lineage>
        <taxon>Bacteria</taxon>
        <taxon>Pseudomonadati</taxon>
        <taxon>Pseudomonadota</taxon>
        <taxon>Betaproteobacteria</taxon>
        <taxon>Nitrosomonadales</taxon>
        <taxon>Nitrosomonadaceae</taxon>
        <taxon>Nitrosomonas</taxon>
    </lineage>
</organism>